<reference key="1">
    <citation type="journal article" date="2005" name="Proc. Natl. Acad. Sci. U.S.A.">
        <title>Whole genome sequence of Staphylococcus saprophyticus reveals the pathogenesis of uncomplicated urinary tract infection.</title>
        <authorList>
            <person name="Kuroda M."/>
            <person name="Yamashita A."/>
            <person name="Hirakawa H."/>
            <person name="Kumano M."/>
            <person name="Morikawa K."/>
            <person name="Higashide M."/>
            <person name="Maruyama A."/>
            <person name="Inose Y."/>
            <person name="Matoba K."/>
            <person name="Toh H."/>
            <person name="Kuhara S."/>
            <person name="Hattori M."/>
            <person name="Ohta T."/>
        </authorList>
    </citation>
    <scope>NUCLEOTIDE SEQUENCE [LARGE SCALE GENOMIC DNA]</scope>
    <source>
        <strain>ATCC 15305 / DSM 20229 / NCIMB 8711 / NCTC 7292 / S-41</strain>
    </source>
</reference>
<organism>
    <name type="scientific">Staphylococcus saprophyticus subsp. saprophyticus (strain ATCC 15305 / DSM 20229 / NCIMB 8711 / NCTC 7292 / S-41)</name>
    <dbReference type="NCBI Taxonomy" id="342451"/>
    <lineage>
        <taxon>Bacteria</taxon>
        <taxon>Bacillati</taxon>
        <taxon>Bacillota</taxon>
        <taxon>Bacilli</taxon>
        <taxon>Bacillales</taxon>
        <taxon>Staphylococcaceae</taxon>
        <taxon>Staphylococcus</taxon>
    </lineage>
</organism>
<feature type="chain" id="PRO_0000196055" description="Small ribosomal subunit protein bS1">
    <location>
        <begin position="1"/>
        <end position="393"/>
    </location>
</feature>
<feature type="domain" description="S1 motif 1" evidence="2">
    <location>
        <begin position="16"/>
        <end position="90"/>
    </location>
</feature>
<feature type="domain" description="S1 motif 2" evidence="2">
    <location>
        <begin position="108"/>
        <end position="173"/>
    </location>
</feature>
<feature type="domain" description="S1 motif 3" evidence="2">
    <location>
        <begin position="194"/>
        <end position="262"/>
    </location>
</feature>
<feature type="domain" description="S1 motif 4" evidence="2">
    <location>
        <begin position="279"/>
        <end position="348"/>
    </location>
</feature>
<feature type="region of interest" description="Disordered" evidence="3">
    <location>
        <begin position="356"/>
        <end position="381"/>
    </location>
</feature>
<feature type="compositionally biased region" description="Polar residues" evidence="3">
    <location>
        <begin position="356"/>
        <end position="369"/>
    </location>
</feature>
<comment type="function">
    <text evidence="1">Binds mRNA; thus facilitating recognition of the initiation point. It is needed to translate mRNA with a short Shine-Dalgarno (SD) purine-rich sequence (By similarity).</text>
</comment>
<comment type="similarity">
    <text evidence="4">Belongs to the bacterial ribosomal protein bS1 family.</text>
</comment>
<evidence type="ECO:0000250" key="1"/>
<evidence type="ECO:0000255" key="2">
    <source>
        <dbReference type="PROSITE-ProRule" id="PRU00180"/>
    </source>
</evidence>
<evidence type="ECO:0000256" key="3">
    <source>
        <dbReference type="SAM" id="MobiDB-lite"/>
    </source>
</evidence>
<evidence type="ECO:0000305" key="4"/>
<gene>
    <name type="primary">rpsA</name>
    <name type="ordered locus">SSP1270</name>
</gene>
<name>RS1_STAS1</name>
<sequence>MTEEFNESMINDIKEGDKVTGEVQEIEEKQVIVAVNGAKFNGIIPISQLSTHHIDNPSDAVKVGDEIGAYVTKVEYDEENETGAYILSKRQLETEKSYEFLQEQLDNNQTIEAKVTEVVKGGLVVDVGQRGFVPASLISTDFIEDFSDFEGQVLKLKVEELDPANNRVILSRKAVEALENAEKKDELLESLNEGDVIEGKVARLTNFGAFVDIGGVDGLVHVSELSHEHVKSPEDVVSIGETVNVKIKSVDKDSERISLSIKDTLPSPFESIKGEFNEGDVIEGTVVRLANFGAFVEIKPGVQGLVHISEISHSHIGSPSEALEPGQVVSVKVLGVDVENERISLSIKATLPNENVIESDSETTQSYLDNGSDDEDNPTLGDVFGDKLKDFKF</sequence>
<dbReference type="EMBL" id="AP008934">
    <property type="protein sequence ID" value="BAE18415.1"/>
    <property type="molecule type" value="Genomic_DNA"/>
</dbReference>
<dbReference type="RefSeq" id="WP_002483245.1">
    <property type="nucleotide sequence ID" value="NZ_MTGA01000038.1"/>
</dbReference>
<dbReference type="SMR" id="Q49XT0"/>
<dbReference type="DNASU" id="3616900"/>
<dbReference type="GeneID" id="3616900"/>
<dbReference type="KEGG" id="ssp:SSP1270"/>
<dbReference type="eggNOG" id="COG0539">
    <property type="taxonomic scope" value="Bacteria"/>
</dbReference>
<dbReference type="HOGENOM" id="CLU_015805_4_5_9"/>
<dbReference type="OrthoDB" id="9804077at2"/>
<dbReference type="Proteomes" id="UP000006371">
    <property type="component" value="Chromosome"/>
</dbReference>
<dbReference type="GO" id="GO:1990904">
    <property type="term" value="C:ribonucleoprotein complex"/>
    <property type="evidence" value="ECO:0007669"/>
    <property type="project" value="UniProtKB-KW"/>
</dbReference>
<dbReference type="GO" id="GO:0005840">
    <property type="term" value="C:ribosome"/>
    <property type="evidence" value="ECO:0007669"/>
    <property type="project" value="UniProtKB-KW"/>
</dbReference>
<dbReference type="GO" id="GO:0003729">
    <property type="term" value="F:mRNA binding"/>
    <property type="evidence" value="ECO:0007669"/>
    <property type="project" value="TreeGrafter"/>
</dbReference>
<dbReference type="GO" id="GO:0003735">
    <property type="term" value="F:structural constituent of ribosome"/>
    <property type="evidence" value="ECO:0007669"/>
    <property type="project" value="TreeGrafter"/>
</dbReference>
<dbReference type="GO" id="GO:0006412">
    <property type="term" value="P:translation"/>
    <property type="evidence" value="ECO:0007669"/>
    <property type="project" value="TreeGrafter"/>
</dbReference>
<dbReference type="CDD" id="cd05687">
    <property type="entry name" value="S1_RPS1_repeat_ec1_hs1"/>
    <property type="match status" value="1"/>
</dbReference>
<dbReference type="CDD" id="cd04465">
    <property type="entry name" value="S1_RPS1_repeat_ec2_hs2"/>
    <property type="match status" value="1"/>
</dbReference>
<dbReference type="CDD" id="cd05688">
    <property type="entry name" value="S1_RPS1_repeat_ec3"/>
    <property type="match status" value="1"/>
</dbReference>
<dbReference type="FunFam" id="2.40.50.140:FF:000114">
    <property type="entry name" value="30S ribosomal protein S1"/>
    <property type="match status" value="1"/>
</dbReference>
<dbReference type="FunFam" id="2.40.50.140:FF:000051">
    <property type="entry name" value="RNA-binding transcriptional accessory protein"/>
    <property type="match status" value="1"/>
</dbReference>
<dbReference type="Gene3D" id="2.40.50.140">
    <property type="entry name" value="Nucleic acid-binding proteins"/>
    <property type="match status" value="4"/>
</dbReference>
<dbReference type="InterPro" id="IPR012340">
    <property type="entry name" value="NA-bd_OB-fold"/>
</dbReference>
<dbReference type="InterPro" id="IPR050437">
    <property type="entry name" value="Ribos_protein_bS1-like"/>
</dbReference>
<dbReference type="InterPro" id="IPR035104">
    <property type="entry name" value="Ribosomal_protein_S1-like"/>
</dbReference>
<dbReference type="InterPro" id="IPR003029">
    <property type="entry name" value="S1_domain"/>
</dbReference>
<dbReference type="NCBIfam" id="NF005208">
    <property type="entry name" value="PRK06676.1"/>
    <property type="match status" value="1"/>
</dbReference>
<dbReference type="PANTHER" id="PTHR10724">
    <property type="entry name" value="30S RIBOSOMAL PROTEIN S1"/>
    <property type="match status" value="1"/>
</dbReference>
<dbReference type="Pfam" id="PF00575">
    <property type="entry name" value="S1"/>
    <property type="match status" value="4"/>
</dbReference>
<dbReference type="PRINTS" id="PR00681">
    <property type="entry name" value="RIBOSOMALS1"/>
</dbReference>
<dbReference type="SMART" id="SM00316">
    <property type="entry name" value="S1"/>
    <property type="match status" value="4"/>
</dbReference>
<dbReference type="SUPFAM" id="SSF50249">
    <property type="entry name" value="Nucleic acid-binding proteins"/>
    <property type="match status" value="4"/>
</dbReference>
<dbReference type="PROSITE" id="PS50126">
    <property type="entry name" value="S1"/>
    <property type="match status" value="4"/>
</dbReference>
<keyword id="KW-1185">Reference proteome</keyword>
<keyword id="KW-0677">Repeat</keyword>
<keyword id="KW-0687">Ribonucleoprotein</keyword>
<keyword id="KW-0689">Ribosomal protein</keyword>
<keyword id="KW-0694">RNA-binding</keyword>
<protein>
    <recommendedName>
        <fullName evidence="4">Small ribosomal subunit protein bS1</fullName>
    </recommendedName>
    <alternativeName>
        <fullName>30S ribosomal protein S1</fullName>
    </alternativeName>
</protein>
<proteinExistence type="inferred from homology"/>
<accession>Q49XT0</accession>